<accession>P51770</accession>
<protein>
    <recommendedName>
        <fullName>Probable spanin, inner membrane subunit</fullName>
        <shortName>i-spanin</shortName>
    </recommendedName>
    <alternativeName>
        <fullName>Protein lysB</fullName>
    </alternativeName>
</protein>
<evidence type="ECO:0000250" key="1"/>
<evidence type="ECO:0000255" key="2"/>
<evidence type="ECO:0000256" key="3">
    <source>
        <dbReference type="SAM" id="MobiDB-lite"/>
    </source>
</evidence>
<reference key="1">
    <citation type="journal article" date="1994" name="J. Bacteriol.">
        <title>Functions involved in bacteriophage P2-induced host cell lysis and identification of a new tail gene.</title>
        <authorList>
            <person name="Ziermann R."/>
            <person name="Bartlett B."/>
            <person name="Calendar R."/>
            <person name="Christie G.E."/>
        </authorList>
    </citation>
    <scope>NUCLEOTIDE SEQUENCE [GENOMIC DNA]</scope>
</reference>
<keyword id="KW-0175">Coiled coil</keyword>
<keyword id="KW-0204">Cytolysis</keyword>
<keyword id="KW-1030">Host cell inner membrane</keyword>
<keyword id="KW-0578">Host cell lysis by virus</keyword>
<keyword id="KW-1032">Host cell membrane</keyword>
<keyword id="KW-1043">Host membrane</keyword>
<keyword id="KW-0472">Membrane</keyword>
<keyword id="KW-1185">Reference proteome</keyword>
<keyword id="KW-0735">Signal-anchor</keyword>
<keyword id="KW-0812">Transmembrane</keyword>
<keyword id="KW-1133">Transmembrane helix</keyword>
<keyword id="KW-1188">Viral release from host cell</keyword>
<proteinExistence type="inferred from homology"/>
<dbReference type="EMBL" id="AF063097">
    <property type="protein sequence ID" value="AAD03278.1"/>
    <property type="molecule type" value="Genomic_DNA"/>
</dbReference>
<dbReference type="PIR" id="F55855">
    <property type="entry name" value="F55855"/>
</dbReference>
<dbReference type="RefSeq" id="NP_046767.1">
    <property type="nucleotide sequence ID" value="NC_001895.1"/>
</dbReference>
<dbReference type="SMR" id="P51770"/>
<dbReference type="GeneID" id="77440798"/>
<dbReference type="KEGG" id="vg:77440798"/>
<dbReference type="Proteomes" id="UP000009092">
    <property type="component" value="Genome"/>
</dbReference>
<dbReference type="GO" id="GO:0020002">
    <property type="term" value="C:host cell plasma membrane"/>
    <property type="evidence" value="ECO:0007669"/>
    <property type="project" value="UniProtKB-SubCell"/>
</dbReference>
<dbReference type="GO" id="GO:0016020">
    <property type="term" value="C:membrane"/>
    <property type="evidence" value="ECO:0007669"/>
    <property type="project" value="UniProtKB-KW"/>
</dbReference>
<dbReference type="GO" id="GO:0031640">
    <property type="term" value="P:killing of cells of another organism"/>
    <property type="evidence" value="ECO:0007669"/>
    <property type="project" value="UniProtKB-KW"/>
</dbReference>
<dbReference type="InterPro" id="IPR020000">
    <property type="entry name" value="Phage_P2_LysB"/>
</dbReference>
<dbReference type="NCBIfam" id="TIGR03495">
    <property type="entry name" value="phage_LysB"/>
    <property type="match status" value="1"/>
</dbReference>
<organism>
    <name type="scientific">Escherichia phage P2</name>
    <name type="common">Bacteriophage P2</name>
    <dbReference type="NCBI Taxonomy" id="2905681"/>
    <lineage>
        <taxon>Viruses</taxon>
        <taxon>Duplodnaviria</taxon>
        <taxon>Heunggongvirae</taxon>
        <taxon>Uroviricota</taxon>
        <taxon>Caudoviricetes</taxon>
        <taxon>Peduoviridae</taxon>
        <taxon>Peduovirus</taxon>
        <taxon>Peduovirus P2</taxon>
    </lineage>
</organism>
<feature type="chain" id="PRO_0000165243" description="Probable spanin, inner membrane subunit">
    <location>
        <begin position="1"/>
        <end position="141"/>
    </location>
</feature>
<feature type="transmembrane region" description="Helical; Signal-anchor for type II membrane protein" evidence="2">
    <location>
        <begin position="1"/>
        <end position="17"/>
    </location>
</feature>
<feature type="topological domain" description="Periplasmic" evidence="2">
    <location>
        <begin position="18"/>
        <end position="141"/>
    </location>
</feature>
<feature type="region of interest" description="Disordered" evidence="3">
    <location>
        <begin position="119"/>
        <end position="141"/>
    </location>
</feature>
<gene>
    <name type="primary">lysB</name>
</gene>
<name>SPAN1_BPP2</name>
<sequence length="141" mass="15811">MSRLMIVLVVLLSLAVAGLFLVKHKNASLRASLDRANNVASGQQTTITMLKNQLHVALTRADKNELAQVALRQELENAAKREAQREKTITRLLNENEDFRRWYGADLPDAVRRLHQRPACTDASDCPQRMPESEPLPDAGQ</sequence>
<comment type="function">
    <text evidence="1">Component of the spanin complex that disrupts the host outer membrane and participates in cell lysis during virus exit. The spanin complex conducts the final step in host lysis by disrupting the outer membrane after holin and endolysin action have permeabilized the inner membrane and degraded the host peptidoglycans. Host outer membrane disruption is possibly due to local fusion between the inner and outer membrane performed by the spanin complex (By similarity).</text>
</comment>
<comment type="subunit">
    <text evidence="1">Interacts (via C-terminus) with the spanin outer lipoprotein subunit (via C-terminus). Part of the spanin complex which spans the entire periplasmic space. The spanin complex is composed of spanin inner membrane subunit and spanin outer membrane subunit (By similarity).</text>
</comment>
<comment type="subcellular location">
    <subcellularLocation>
        <location evidence="1">Host cell inner membrane</location>
        <topology evidence="1">Single-pass type II membrane protein</topology>
        <orientation evidence="1">Periplasmic side</orientation>
    </subcellularLocation>
</comment>
<organismHost>
    <name type="scientific">Enterobacteriaceae</name>
    <dbReference type="NCBI Taxonomy" id="543"/>
</organismHost>